<dbReference type="EC" id="1.4.99.-"/>
<dbReference type="EMBL" id="AL646052">
    <property type="protein sequence ID" value="CAD15969.1"/>
    <property type="molecule type" value="Genomic_DNA"/>
</dbReference>
<dbReference type="RefSeq" id="WP_011002189.1">
    <property type="nucleotide sequence ID" value="NC_003295.1"/>
</dbReference>
<dbReference type="SMR" id="Q8XX54"/>
<dbReference type="STRING" id="267608.RSc2262"/>
<dbReference type="EnsemblBacteria" id="CAD15969">
    <property type="protein sequence ID" value="CAD15969"/>
    <property type="gene ID" value="RSc2262"/>
</dbReference>
<dbReference type="KEGG" id="rso:RSc2262"/>
<dbReference type="PATRIC" id="fig|267608.8.peg.2302"/>
<dbReference type="eggNOG" id="COG0665">
    <property type="taxonomic scope" value="Bacteria"/>
</dbReference>
<dbReference type="HOGENOM" id="CLU_007884_9_2_4"/>
<dbReference type="Proteomes" id="UP000001436">
    <property type="component" value="Chromosome"/>
</dbReference>
<dbReference type="GO" id="GO:0005737">
    <property type="term" value="C:cytoplasm"/>
    <property type="evidence" value="ECO:0007669"/>
    <property type="project" value="TreeGrafter"/>
</dbReference>
<dbReference type="GO" id="GO:0005886">
    <property type="term" value="C:plasma membrane"/>
    <property type="evidence" value="ECO:0007669"/>
    <property type="project" value="TreeGrafter"/>
</dbReference>
<dbReference type="GO" id="GO:0008718">
    <property type="term" value="F:D-amino-acid dehydrogenase activity"/>
    <property type="evidence" value="ECO:0007669"/>
    <property type="project" value="UniProtKB-UniRule"/>
</dbReference>
<dbReference type="GO" id="GO:0055130">
    <property type="term" value="P:D-alanine catabolic process"/>
    <property type="evidence" value="ECO:0007669"/>
    <property type="project" value="TreeGrafter"/>
</dbReference>
<dbReference type="Gene3D" id="3.30.9.10">
    <property type="entry name" value="D-Amino Acid Oxidase, subunit A, domain 2"/>
    <property type="match status" value="1"/>
</dbReference>
<dbReference type="Gene3D" id="3.50.50.60">
    <property type="entry name" value="FAD/NAD(P)-binding domain"/>
    <property type="match status" value="2"/>
</dbReference>
<dbReference type="HAMAP" id="MF_01202">
    <property type="entry name" value="DadA"/>
    <property type="match status" value="1"/>
</dbReference>
<dbReference type="InterPro" id="IPR023080">
    <property type="entry name" value="DadA"/>
</dbReference>
<dbReference type="InterPro" id="IPR006076">
    <property type="entry name" value="FAD-dep_OxRdtase"/>
</dbReference>
<dbReference type="InterPro" id="IPR036188">
    <property type="entry name" value="FAD/NAD-bd_sf"/>
</dbReference>
<dbReference type="NCBIfam" id="NF001933">
    <property type="entry name" value="PRK00711.1"/>
    <property type="match status" value="1"/>
</dbReference>
<dbReference type="PANTHER" id="PTHR13847:SF280">
    <property type="entry name" value="D-AMINO ACID DEHYDROGENASE"/>
    <property type="match status" value="1"/>
</dbReference>
<dbReference type="PANTHER" id="PTHR13847">
    <property type="entry name" value="SARCOSINE DEHYDROGENASE-RELATED"/>
    <property type="match status" value="1"/>
</dbReference>
<dbReference type="Pfam" id="PF01266">
    <property type="entry name" value="DAO"/>
    <property type="match status" value="1"/>
</dbReference>
<dbReference type="SUPFAM" id="SSF54373">
    <property type="entry name" value="FAD-linked reductases, C-terminal domain"/>
    <property type="match status" value="1"/>
</dbReference>
<dbReference type="SUPFAM" id="SSF51905">
    <property type="entry name" value="FAD/NAD(P)-binding domain"/>
    <property type="match status" value="1"/>
</dbReference>
<sequence length="425" mass="44455">MQITVVGAGIVGISTAYALAQEGHQVTLVERNPGPGEGTSYANGGQLSYSYVAPLAGPGVLSHVPGWLLRRDSPLRLKPSLDPVLLRWGLRFIAACNRERADRTTRELLALSFYSRARMEALRAASPDLSFSFARRGKLVVYRDAAAFASARAQVGYQATLGCEQHALSADETIAREPALAGARGAIVGAIYTPDEDVADCHQLCVGLFNRLCALPNVALRFNAGAESLWVEGRRVRGVRTAHEPITADAVVVAAGVASAGLLGPLRIDPGLYPLKGYSISLPLGEGGAGSDGAPVVSVTDAARKIVYARIGRTLRVAGMADLVGWSDRLDPRRVQTLYDETRALFPAALRASDAGADAAPWAGMRPATPTGVPVVGPSPVDGLWLNVGHGALGFTLAMGSAGLLADLIARRAPAIAAAPYALAR</sequence>
<feature type="chain" id="PRO_0000166144" description="D-amino acid dehydrogenase 2">
    <location>
        <begin position="1"/>
        <end position="425"/>
    </location>
</feature>
<feature type="binding site" evidence="2">
    <location>
        <begin position="3"/>
        <end position="17"/>
    </location>
    <ligand>
        <name>FAD</name>
        <dbReference type="ChEBI" id="CHEBI:57692"/>
    </ligand>
</feature>
<keyword id="KW-0274">FAD</keyword>
<keyword id="KW-0285">Flavoprotein</keyword>
<keyword id="KW-0560">Oxidoreductase</keyword>
<keyword id="KW-1185">Reference proteome</keyword>
<comment type="function">
    <text evidence="1">Oxidative deamination of D-amino acids.</text>
</comment>
<comment type="catalytic activity">
    <reaction>
        <text>a D-alpha-amino acid + A + H2O = a 2-oxocarboxylate + AH2 + NH4(+)</text>
        <dbReference type="Rhea" id="RHEA:18125"/>
        <dbReference type="ChEBI" id="CHEBI:13193"/>
        <dbReference type="ChEBI" id="CHEBI:15377"/>
        <dbReference type="ChEBI" id="CHEBI:17499"/>
        <dbReference type="ChEBI" id="CHEBI:28938"/>
        <dbReference type="ChEBI" id="CHEBI:35179"/>
        <dbReference type="ChEBI" id="CHEBI:59871"/>
    </reaction>
</comment>
<comment type="cofactor">
    <cofactor evidence="1">
        <name>FAD</name>
        <dbReference type="ChEBI" id="CHEBI:57692"/>
    </cofactor>
</comment>
<comment type="similarity">
    <text evidence="3">Belongs to the DadA oxidoreductase family.</text>
</comment>
<proteinExistence type="inferred from homology"/>
<reference key="1">
    <citation type="journal article" date="2002" name="Nature">
        <title>Genome sequence of the plant pathogen Ralstonia solanacearum.</title>
        <authorList>
            <person name="Salanoubat M."/>
            <person name="Genin S."/>
            <person name="Artiguenave F."/>
            <person name="Gouzy J."/>
            <person name="Mangenot S."/>
            <person name="Arlat M."/>
            <person name="Billault A."/>
            <person name="Brottier P."/>
            <person name="Camus J.-C."/>
            <person name="Cattolico L."/>
            <person name="Chandler M."/>
            <person name="Choisne N."/>
            <person name="Claudel-Renard C."/>
            <person name="Cunnac S."/>
            <person name="Demange N."/>
            <person name="Gaspin C."/>
            <person name="Lavie M."/>
            <person name="Moisan A."/>
            <person name="Robert C."/>
            <person name="Saurin W."/>
            <person name="Schiex T."/>
            <person name="Siguier P."/>
            <person name="Thebault P."/>
            <person name="Whalen M."/>
            <person name="Wincker P."/>
            <person name="Levy M."/>
            <person name="Weissenbach J."/>
            <person name="Boucher C.A."/>
        </authorList>
    </citation>
    <scope>NUCLEOTIDE SEQUENCE [LARGE SCALE GENOMIC DNA]</scope>
    <source>
        <strain>ATCC BAA-1114 / GMI1000</strain>
    </source>
</reference>
<accession>Q8XX54</accession>
<gene>
    <name type="primary">dadA2</name>
    <name type="ordered locus">RSc2262</name>
    <name type="ORF">RS01297</name>
</gene>
<name>DADA2_RALN1</name>
<protein>
    <recommendedName>
        <fullName>D-amino acid dehydrogenase 2</fullName>
        <ecNumber>1.4.99.-</ecNumber>
    </recommendedName>
</protein>
<evidence type="ECO:0000250" key="1"/>
<evidence type="ECO:0000255" key="2"/>
<evidence type="ECO:0000305" key="3"/>
<organism>
    <name type="scientific">Ralstonia nicotianae (strain ATCC BAA-1114 / GMI1000)</name>
    <name type="common">Ralstonia solanacearum</name>
    <dbReference type="NCBI Taxonomy" id="267608"/>
    <lineage>
        <taxon>Bacteria</taxon>
        <taxon>Pseudomonadati</taxon>
        <taxon>Pseudomonadota</taxon>
        <taxon>Betaproteobacteria</taxon>
        <taxon>Burkholderiales</taxon>
        <taxon>Burkholderiaceae</taxon>
        <taxon>Ralstonia</taxon>
        <taxon>Ralstonia solanacearum species complex</taxon>
    </lineage>
</organism>